<evidence type="ECO:0000255" key="1">
    <source>
        <dbReference type="HAMAP-Rule" id="MF_01318"/>
    </source>
</evidence>
<evidence type="ECO:0000305" key="2"/>
<reference key="1">
    <citation type="journal article" date="1993" name="Nucleic Acids Res.">
        <title>Nucleotide sequence of the genes encoding L11 and L1 equivalent ribosomal protein from Streptomyces sp. FRI-5.</title>
        <authorList>
            <person name="Ruengjitchatchawalya M."/>
            <person name="Okamoto S."/>
            <person name="Nihira T."/>
            <person name="Yamada M."/>
        </authorList>
    </citation>
    <scope>NUCLEOTIDE SEQUENCE [GENOMIC DNA]</scope>
</reference>
<gene>
    <name evidence="1" type="primary">rplA</name>
</gene>
<keyword id="KW-0678">Repressor</keyword>
<keyword id="KW-0687">Ribonucleoprotein</keyword>
<keyword id="KW-0689">Ribosomal protein</keyword>
<keyword id="KW-0694">RNA-binding</keyword>
<keyword id="KW-0699">rRNA-binding</keyword>
<keyword id="KW-0810">Translation regulation</keyword>
<keyword id="KW-0820">tRNA-binding</keyword>
<comment type="function">
    <text evidence="1">Binds directly to 23S rRNA. The L1 stalk is quite mobile in the ribosome, and is involved in E site tRNA release.</text>
</comment>
<comment type="function">
    <text evidence="1">Protein L1 is also a translational repressor protein, it controls the translation of the L11 operon by binding to its mRNA.</text>
</comment>
<comment type="subunit">
    <text evidence="1">Part of the 50S ribosomal subunit.</text>
</comment>
<comment type="similarity">
    <text evidence="1">Belongs to the universal ribosomal protein uL1 family.</text>
</comment>
<proteinExistence type="inferred from homology"/>
<feature type="chain" id="PRO_0000125755" description="Large ribosomal subunit protein uL1">
    <location>
        <begin position="1"/>
        <end position="242"/>
    </location>
</feature>
<organism>
    <name type="scientific">Streptomyces sp. (strain FRI-5)</name>
    <dbReference type="NCBI Taxonomy" id="74574"/>
    <lineage>
        <taxon>Bacteria</taxon>
        <taxon>Bacillati</taxon>
        <taxon>Actinomycetota</taxon>
        <taxon>Actinomycetes</taxon>
        <taxon>Kitasatosporales</taxon>
        <taxon>Streptomycetaceae</taxon>
        <taxon>Streptomyces</taxon>
    </lineage>
</organism>
<protein>
    <recommendedName>
        <fullName evidence="1">Large ribosomal subunit protein uL1</fullName>
    </recommendedName>
    <alternativeName>
        <fullName evidence="2">50S ribosomal protein L1</fullName>
    </alternativeName>
</protein>
<accession>Q07976</accession>
<sequence>MKRSKTLRAADAKVDREKLYAPLEAVRLAKETSTTKFDATVEVAFRLGVDPRKADQMVRGTVNLPHGTGKTARVLVFATGDRAAAAEAAGADIVGDDELINEIAKGNRLNEFDAVVATPDLMGKVGRLGRVLGPRGLMPNPKTGTVTMDVAKAVTDIKGGKIEFRVDKHSNLHFIIGKVSFSDEQLVENYAAALDEIVRLKPSAAKGRYIKKAALSTTMGPGIQLDSNRTRNLLVEEDPAAV</sequence>
<name>RL1_STRSF</name>
<dbReference type="EMBL" id="D14450">
    <property type="protein sequence ID" value="BAA03345.1"/>
    <property type="molecule type" value="Genomic_DNA"/>
</dbReference>
<dbReference type="PIR" id="S40771">
    <property type="entry name" value="S40771"/>
</dbReference>
<dbReference type="SMR" id="Q07976"/>
<dbReference type="GO" id="GO:0015934">
    <property type="term" value="C:large ribosomal subunit"/>
    <property type="evidence" value="ECO:0007669"/>
    <property type="project" value="InterPro"/>
</dbReference>
<dbReference type="GO" id="GO:0019843">
    <property type="term" value="F:rRNA binding"/>
    <property type="evidence" value="ECO:0007669"/>
    <property type="project" value="UniProtKB-UniRule"/>
</dbReference>
<dbReference type="GO" id="GO:0003735">
    <property type="term" value="F:structural constituent of ribosome"/>
    <property type="evidence" value="ECO:0007669"/>
    <property type="project" value="InterPro"/>
</dbReference>
<dbReference type="GO" id="GO:0000049">
    <property type="term" value="F:tRNA binding"/>
    <property type="evidence" value="ECO:0007669"/>
    <property type="project" value="UniProtKB-KW"/>
</dbReference>
<dbReference type="GO" id="GO:0006417">
    <property type="term" value="P:regulation of translation"/>
    <property type="evidence" value="ECO:0007669"/>
    <property type="project" value="UniProtKB-KW"/>
</dbReference>
<dbReference type="GO" id="GO:0006412">
    <property type="term" value="P:translation"/>
    <property type="evidence" value="ECO:0007669"/>
    <property type="project" value="UniProtKB-UniRule"/>
</dbReference>
<dbReference type="CDD" id="cd00403">
    <property type="entry name" value="Ribosomal_L1"/>
    <property type="match status" value="1"/>
</dbReference>
<dbReference type="FunFam" id="3.40.50.790:FF:000001">
    <property type="entry name" value="50S ribosomal protein L1"/>
    <property type="match status" value="1"/>
</dbReference>
<dbReference type="Gene3D" id="3.30.190.20">
    <property type="match status" value="1"/>
</dbReference>
<dbReference type="Gene3D" id="3.40.50.790">
    <property type="match status" value="1"/>
</dbReference>
<dbReference type="HAMAP" id="MF_01318_B">
    <property type="entry name" value="Ribosomal_uL1_B"/>
    <property type="match status" value="1"/>
</dbReference>
<dbReference type="InterPro" id="IPR005878">
    <property type="entry name" value="Ribosom_uL1_bac-type"/>
</dbReference>
<dbReference type="InterPro" id="IPR002143">
    <property type="entry name" value="Ribosomal_uL1"/>
</dbReference>
<dbReference type="InterPro" id="IPR023674">
    <property type="entry name" value="Ribosomal_uL1-like"/>
</dbReference>
<dbReference type="InterPro" id="IPR028364">
    <property type="entry name" value="Ribosomal_uL1/biogenesis"/>
</dbReference>
<dbReference type="InterPro" id="IPR016095">
    <property type="entry name" value="Ribosomal_uL1_3-a/b-sand"/>
</dbReference>
<dbReference type="InterPro" id="IPR023673">
    <property type="entry name" value="Ribosomal_uL1_CS"/>
</dbReference>
<dbReference type="NCBIfam" id="TIGR01169">
    <property type="entry name" value="rplA_bact"/>
    <property type="match status" value="1"/>
</dbReference>
<dbReference type="PANTHER" id="PTHR36427">
    <property type="entry name" value="54S RIBOSOMAL PROTEIN L1, MITOCHONDRIAL"/>
    <property type="match status" value="1"/>
</dbReference>
<dbReference type="PANTHER" id="PTHR36427:SF3">
    <property type="entry name" value="LARGE RIBOSOMAL SUBUNIT PROTEIN UL1M"/>
    <property type="match status" value="1"/>
</dbReference>
<dbReference type="Pfam" id="PF00687">
    <property type="entry name" value="Ribosomal_L1"/>
    <property type="match status" value="1"/>
</dbReference>
<dbReference type="PIRSF" id="PIRSF002155">
    <property type="entry name" value="Ribosomal_L1"/>
    <property type="match status" value="1"/>
</dbReference>
<dbReference type="SUPFAM" id="SSF56808">
    <property type="entry name" value="Ribosomal protein L1"/>
    <property type="match status" value="1"/>
</dbReference>
<dbReference type="PROSITE" id="PS01199">
    <property type="entry name" value="RIBOSOMAL_L1"/>
    <property type="match status" value="1"/>
</dbReference>